<evidence type="ECO:0000255" key="1">
    <source>
        <dbReference type="HAMAP-Rule" id="MF_00074"/>
    </source>
</evidence>
<evidence type="ECO:0000256" key="2">
    <source>
        <dbReference type="SAM" id="MobiDB-lite"/>
    </source>
</evidence>
<dbReference type="EC" id="2.1.1.-" evidence="1"/>
<dbReference type="EMBL" id="BA000028">
    <property type="protein sequence ID" value="BAC15445.1"/>
    <property type="molecule type" value="Genomic_DNA"/>
</dbReference>
<dbReference type="RefSeq" id="WP_011067887.1">
    <property type="nucleotide sequence ID" value="NC_004193.1"/>
</dbReference>
<dbReference type="SMR" id="Q8EKU4"/>
<dbReference type="STRING" id="221109.gene:10735741"/>
<dbReference type="KEGG" id="oih:OB3489"/>
<dbReference type="eggNOG" id="COG0357">
    <property type="taxonomic scope" value="Bacteria"/>
</dbReference>
<dbReference type="HOGENOM" id="CLU_065341_0_2_9"/>
<dbReference type="OrthoDB" id="9808773at2"/>
<dbReference type="PhylomeDB" id="Q8EKU4"/>
<dbReference type="Proteomes" id="UP000000822">
    <property type="component" value="Chromosome"/>
</dbReference>
<dbReference type="GO" id="GO:0005829">
    <property type="term" value="C:cytosol"/>
    <property type="evidence" value="ECO:0007669"/>
    <property type="project" value="TreeGrafter"/>
</dbReference>
<dbReference type="GO" id="GO:0070043">
    <property type="term" value="F:rRNA (guanine-N7-)-methyltransferase activity"/>
    <property type="evidence" value="ECO:0007669"/>
    <property type="project" value="UniProtKB-UniRule"/>
</dbReference>
<dbReference type="CDD" id="cd02440">
    <property type="entry name" value="AdoMet_MTases"/>
    <property type="match status" value="1"/>
</dbReference>
<dbReference type="FunFam" id="3.40.50.150:FF:000041">
    <property type="entry name" value="Ribosomal RNA small subunit methyltransferase G"/>
    <property type="match status" value="1"/>
</dbReference>
<dbReference type="Gene3D" id="3.40.50.150">
    <property type="entry name" value="Vaccinia Virus protein VP39"/>
    <property type="match status" value="1"/>
</dbReference>
<dbReference type="HAMAP" id="MF_00074">
    <property type="entry name" value="16SrRNA_methyltr_G"/>
    <property type="match status" value="1"/>
</dbReference>
<dbReference type="InterPro" id="IPR003682">
    <property type="entry name" value="rRNA_ssu_MeTfrase_G"/>
</dbReference>
<dbReference type="InterPro" id="IPR029063">
    <property type="entry name" value="SAM-dependent_MTases_sf"/>
</dbReference>
<dbReference type="NCBIfam" id="TIGR00138">
    <property type="entry name" value="rsmG_gidB"/>
    <property type="match status" value="1"/>
</dbReference>
<dbReference type="PANTHER" id="PTHR31760">
    <property type="entry name" value="S-ADENOSYL-L-METHIONINE-DEPENDENT METHYLTRANSFERASES SUPERFAMILY PROTEIN"/>
    <property type="match status" value="1"/>
</dbReference>
<dbReference type="PANTHER" id="PTHR31760:SF0">
    <property type="entry name" value="S-ADENOSYL-L-METHIONINE-DEPENDENT METHYLTRANSFERASES SUPERFAMILY PROTEIN"/>
    <property type="match status" value="1"/>
</dbReference>
<dbReference type="Pfam" id="PF02527">
    <property type="entry name" value="GidB"/>
    <property type="match status" value="1"/>
</dbReference>
<dbReference type="PIRSF" id="PIRSF003078">
    <property type="entry name" value="GidB"/>
    <property type="match status" value="1"/>
</dbReference>
<dbReference type="SUPFAM" id="SSF53335">
    <property type="entry name" value="S-adenosyl-L-methionine-dependent methyltransferases"/>
    <property type="match status" value="1"/>
</dbReference>
<comment type="function">
    <text evidence="1">Specifically methylates the N7 position of guanine in position 535 of 16S rRNA.</text>
</comment>
<comment type="subcellular location">
    <subcellularLocation>
        <location evidence="1">Cytoplasm</location>
    </subcellularLocation>
</comment>
<comment type="similarity">
    <text evidence="1">Belongs to the methyltransferase superfamily. RNA methyltransferase RsmG family.</text>
</comment>
<protein>
    <recommendedName>
        <fullName evidence="1">Ribosomal RNA small subunit methyltransferase G</fullName>
        <ecNumber evidence="1">2.1.1.-</ecNumber>
    </recommendedName>
    <alternativeName>
        <fullName evidence="1">16S rRNA 7-methylguanosine methyltransferase</fullName>
        <shortName evidence="1">16S rRNA m7G methyltransferase</shortName>
    </alternativeName>
</protein>
<sequence>MKPEQFVHALKEKGINLSEKQTEQFYIYFQELVEWNQKVNLTAITDQEEVYVKHFYDCVTAAFYHDFNQEISICDIGAGAGFPSIPLKIVFPQLKITIVDSLKKRITFLNHLATKLELSNVAFYHDRAENFGKNKTFRESFDIVTARAVARMSVLSELCLPLVKKNGVFIAMKGAQAKEELEVGKPAIELLGGEVEEIHTFSLPIEESERSIILISKKRQTPKKYPRKAGLPNKEPIE</sequence>
<organism>
    <name type="scientific">Oceanobacillus iheyensis (strain DSM 14371 / CIP 107618 / JCM 11309 / KCTC 3954 / HTE831)</name>
    <dbReference type="NCBI Taxonomy" id="221109"/>
    <lineage>
        <taxon>Bacteria</taxon>
        <taxon>Bacillati</taxon>
        <taxon>Bacillota</taxon>
        <taxon>Bacilli</taxon>
        <taxon>Bacillales</taxon>
        <taxon>Bacillaceae</taxon>
        <taxon>Oceanobacillus</taxon>
    </lineage>
</organism>
<feature type="chain" id="PRO_0000184296" description="Ribosomal RNA small subunit methyltransferase G">
    <location>
        <begin position="1"/>
        <end position="238"/>
    </location>
</feature>
<feature type="region of interest" description="Disordered" evidence="2">
    <location>
        <begin position="219"/>
        <end position="238"/>
    </location>
</feature>
<feature type="binding site" evidence="1">
    <location>
        <position position="77"/>
    </location>
    <ligand>
        <name>S-adenosyl-L-methionine</name>
        <dbReference type="ChEBI" id="CHEBI:59789"/>
    </ligand>
</feature>
<feature type="binding site" evidence="1">
    <location>
        <position position="82"/>
    </location>
    <ligand>
        <name>S-adenosyl-L-methionine</name>
        <dbReference type="ChEBI" id="CHEBI:59789"/>
    </ligand>
</feature>
<feature type="binding site" evidence="1">
    <location>
        <begin position="128"/>
        <end position="129"/>
    </location>
    <ligand>
        <name>S-adenosyl-L-methionine</name>
        <dbReference type="ChEBI" id="CHEBI:59789"/>
    </ligand>
</feature>
<feature type="binding site" evidence="1">
    <location>
        <position position="147"/>
    </location>
    <ligand>
        <name>S-adenosyl-L-methionine</name>
        <dbReference type="ChEBI" id="CHEBI:59789"/>
    </ligand>
</feature>
<name>RSMG_OCEIH</name>
<gene>
    <name evidence="1" type="primary">rsmG</name>
    <name type="ordered locus">OB3489</name>
</gene>
<proteinExistence type="inferred from homology"/>
<reference key="1">
    <citation type="journal article" date="2002" name="Nucleic Acids Res.">
        <title>Genome sequence of Oceanobacillus iheyensis isolated from the Iheya Ridge and its unexpected adaptive capabilities to extreme environments.</title>
        <authorList>
            <person name="Takami H."/>
            <person name="Takaki Y."/>
            <person name="Uchiyama I."/>
        </authorList>
    </citation>
    <scope>NUCLEOTIDE SEQUENCE [LARGE SCALE GENOMIC DNA]</scope>
    <source>
        <strain>DSM 14371 / CIP 107618 / JCM 11309 / KCTC 3954 / HTE831</strain>
    </source>
</reference>
<accession>Q8EKU4</accession>
<keyword id="KW-0963">Cytoplasm</keyword>
<keyword id="KW-0489">Methyltransferase</keyword>
<keyword id="KW-1185">Reference proteome</keyword>
<keyword id="KW-0698">rRNA processing</keyword>
<keyword id="KW-0949">S-adenosyl-L-methionine</keyword>
<keyword id="KW-0808">Transferase</keyword>